<comment type="similarity">
    <text evidence="1">Belongs to the UPF0319 family.</text>
</comment>
<sequence length="226" mass="24613">MKLGLVAGMLAVCFSFSSVAMTLKLTPEIDLLVVDGKNMSGSLLKGADSLELNSGMHQILFKVIKPLPTDPLVLYSSPPLIVVFNAHNTRSVAIKLPVINTLRDGHQFSKNPLYQLIGDNGHPLSVRHDVLRQDHLNNSTTLETVMAAYNVGKYNASVPAFAAIPPSPVSAVPGTTIPVAGVNTPHKTASLQGENVTEQMLQYWFLQANPETQKRFLIWAKKQPIH</sequence>
<protein>
    <recommendedName>
        <fullName evidence="1">UPF0319 protein YPTB1460</fullName>
    </recommendedName>
</protein>
<reference key="1">
    <citation type="journal article" date="2004" name="Proc. Natl. Acad. Sci. U.S.A.">
        <title>Insights into the evolution of Yersinia pestis through whole-genome comparison with Yersinia pseudotuberculosis.</title>
        <authorList>
            <person name="Chain P.S.G."/>
            <person name="Carniel E."/>
            <person name="Larimer F.W."/>
            <person name="Lamerdin J."/>
            <person name="Stoutland P.O."/>
            <person name="Regala W.M."/>
            <person name="Georgescu A.M."/>
            <person name="Vergez L.M."/>
            <person name="Land M.L."/>
            <person name="Motin V.L."/>
            <person name="Brubaker R.R."/>
            <person name="Fowler J."/>
            <person name="Hinnebusch J."/>
            <person name="Marceau M."/>
            <person name="Medigue C."/>
            <person name="Simonet M."/>
            <person name="Chenal-Francisque V."/>
            <person name="Souza B."/>
            <person name="Dacheux D."/>
            <person name="Elliott J.M."/>
            <person name="Derbise A."/>
            <person name="Hauser L.J."/>
            <person name="Garcia E."/>
        </authorList>
    </citation>
    <scope>NUCLEOTIDE SEQUENCE [LARGE SCALE GENOMIC DNA]</scope>
    <source>
        <strain>IP32953</strain>
    </source>
</reference>
<gene>
    <name type="ordered locus">YPTB1460</name>
</gene>
<proteinExistence type="inferred from homology"/>
<dbReference type="EMBL" id="BX936398">
    <property type="protein sequence ID" value="CAH20700.1"/>
    <property type="molecule type" value="Genomic_DNA"/>
</dbReference>
<dbReference type="RefSeq" id="WP_002213058.1">
    <property type="nucleotide sequence ID" value="NZ_CP009712.1"/>
</dbReference>
<dbReference type="KEGG" id="ypo:BZ17_1058"/>
<dbReference type="KEGG" id="yps:YPTB1460"/>
<dbReference type="PATRIC" id="fig|273123.14.peg.1123"/>
<dbReference type="Proteomes" id="UP000001011">
    <property type="component" value="Chromosome"/>
</dbReference>
<dbReference type="HAMAP" id="MF_00789">
    <property type="entry name" value="UPF0319"/>
    <property type="match status" value="1"/>
</dbReference>
<dbReference type="InterPro" id="IPR018635">
    <property type="entry name" value="UPF0319"/>
</dbReference>
<dbReference type="NCBIfam" id="NF002967">
    <property type="entry name" value="PRK03641.1"/>
    <property type="match status" value="1"/>
</dbReference>
<dbReference type="PANTHER" id="PTHR38108">
    <property type="entry name" value="UPF0319 PROTEIN YCCT"/>
    <property type="match status" value="1"/>
</dbReference>
<dbReference type="PANTHER" id="PTHR38108:SF1">
    <property type="entry name" value="UPF0319 PROTEIN YCCT"/>
    <property type="match status" value="1"/>
</dbReference>
<dbReference type="Pfam" id="PF09829">
    <property type="entry name" value="DUF2057"/>
    <property type="match status" value="1"/>
</dbReference>
<keyword id="KW-0732">Signal</keyword>
<evidence type="ECO:0000255" key="1">
    <source>
        <dbReference type="HAMAP-Rule" id="MF_00789"/>
    </source>
</evidence>
<organism>
    <name type="scientific">Yersinia pseudotuberculosis serotype I (strain IP32953)</name>
    <dbReference type="NCBI Taxonomy" id="273123"/>
    <lineage>
        <taxon>Bacteria</taxon>
        <taxon>Pseudomonadati</taxon>
        <taxon>Pseudomonadota</taxon>
        <taxon>Gammaproteobacteria</taxon>
        <taxon>Enterobacterales</taxon>
        <taxon>Yersiniaceae</taxon>
        <taxon>Yersinia</taxon>
    </lineage>
</organism>
<name>Y1460_YERPS</name>
<feature type="signal peptide" evidence="1">
    <location>
        <begin position="1"/>
        <end position="20"/>
    </location>
</feature>
<feature type="chain" id="PRO_0000036319" description="UPF0319 protein YPTB1460">
    <location>
        <begin position="21"/>
        <end position="226"/>
    </location>
</feature>
<accession>Q66CE3</accession>